<dbReference type="EMBL" id="AE004439">
    <property type="protein sequence ID" value="AAK02620.1"/>
    <property type="molecule type" value="Genomic_DNA"/>
</dbReference>
<dbReference type="RefSeq" id="WP_005721994.1">
    <property type="nucleotide sequence ID" value="NC_002663.1"/>
</dbReference>
<dbReference type="SMR" id="Q9CN99"/>
<dbReference type="STRING" id="272843.PM0536"/>
<dbReference type="EnsemblBacteria" id="AAK02620">
    <property type="protein sequence ID" value="AAK02620"/>
    <property type="gene ID" value="PM0536"/>
</dbReference>
<dbReference type="KEGG" id="pmu:PM0536"/>
<dbReference type="HOGENOM" id="CLU_143392_0_0_6"/>
<dbReference type="OrthoDB" id="5677388at2"/>
<dbReference type="Proteomes" id="UP000000809">
    <property type="component" value="Chromosome"/>
</dbReference>
<dbReference type="Gene3D" id="3.10.450.140">
    <property type="entry name" value="dsDNA mimic, putative"/>
    <property type="match status" value="1"/>
</dbReference>
<dbReference type="HAMAP" id="MF_00680">
    <property type="entry name" value="Put_dsDNA_mimic"/>
    <property type="match status" value="1"/>
</dbReference>
<dbReference type="InterPro" id="IPR007376">
    <property type="entry name" value="dsDNA_mimic_put"/>
</dbReference>
<dbReference type="InterPro" id="IPR036763">
    <property type="entry name" value="Put_dsDNA_mimic_sf"/>
</dbReference>
<dbReference type="NCBIfam" id="NF003469">
    <property type="entry name" value="PRK05094.1"/>
    <property type="match status" value="1"/>
</dbReference>
<dbReference type="Pfam" id="PF04269">
    <property type="entry name" value="DUF440"/>
    <property type="match status" value="1"/>
</dbReference>
<dbReference type="PIRSF" id="PIRSF004916">
    <property type="entry name" value="UCP004916"/>
    <property type="match status" value="1"/>
</dbReference>
<dbReference type="SUPFAM" id="SSF102816">
    <property type="entry name" value="Putative dsDNA mimic"/>
    <property type="match status" value="1"/>
</dbReference>
<gene>
    <name type="ordered locus">PM0536</name>
</gene>
<sequence>MTEITKLDPDVAIDLAYDIFLEMAPEHLDPADILLFNLQFEERGGVEFVETADDWEMEIGVLIDPEEYAEVWIGLVNEQDEMDDIFAKFLISHREEDREFHVVWKK</sequence>
<feature type="chain" id="PRO_0000072780" description="Putative double-stranded DNA mimic protein PM0536">
    <location>
        <begin position="1"/>
        <end position="106"/>
    </location>
</feature>
<name>Y536_PASMU</name>
<organism>
    <name type="scientific">Pasteurella multocida (strain Pm70)</name>
    <dbReference type="NCBI Taxonomy" id="272843"/>
    <lineage>
        <taxon>Bacteria</taxon>
        <taxon>Pseudomonadati</taxon>
        <taxon>Pseudomonadota</taxon>
        <taxon>Gammaproteobacteria</taxon>
        <taxon>Pasteurellales</taxon>
        <taxon>Pasteurellaceae</taxon>
        <taxon>Pasteurella</taxon>
    </lineage>
</organism>
<proteinExistence type="inferred from homology"/>
<comment type="function">
    <text evidence="1">May act as a double-stranded DNA (dsDNA) mimic. Probably regulates the activity of a dsDNA-binding protein.</text>
</comment>
<comment type="similarity">
    <text evidence="1">Belongs to the putative dsDNA mimic protein family.</text>
</comment>
<accession>Q9CN99</accession>
<keyword id="KW-1185">Reference proteome</keyword>
<reference key="1">
    <citation type="journal article" date="2001" name="Proc. Natl. Acad. Sci. U.S.A.">
        <title>Complete genomic sequence of Pasteurella multocida Pm70.</title>
        <authorList>
            <person name="May B.J."/>
            <person name="Zhang Q."/>
            <person name="Li L.L."/>
            <person name="Paustian M.L."/>
            <person name="Whittam T.S."/>
            <person name="Kapur V."/>
        </authorList>
    </citation>
    <scope>NUCLEOTIDE SEQUENCE [LARGE SCALE GENOMIC DNA]</scope>
    <source>
        <strain>Pm70</strain>
    </source>
</reference>
<evidence type="ECO:0000255" key="1">
    <source>
        <dbReference type="HAMAP-Rule" id="MF_00680"/>
    </source>
</evidence>
<protein>
    <recommendedName>
        <fullName evidence="1">Putative double-stranded DNA mimic protein PM0536</fullName>
    </recommendedName>
</protein>